<reference key="1">
    <citation type="journal article" date="1996" name="Microbiology">
        <title>Chorismate synthase from Staphylococcus aureus.</title>
        <authorList>
            <person name="Horsburgh M.J."/>
            <person name="Foster T.J."/>
            <person name="Barth P.T."/>
            <person name="Coggins J.R."/>
        </authorList>
    </citation>
    <scope>NUCLEOTIDE SEQUENCE [GENOMIC DNA]</scope>
    <source>
        <strain>601055</strain>
    </source>
</reference>
<evidence type="ECO:0000255" key="1">
    <source>
        <dbReference type="HAMAP-Rule" id="MF_00451"/>
    </source>
</evidence>
<evidence type="ECO:0000305" key="2"/>
<accession>P68870</accession>
<accession>P50588</accession>
<feature type="chain" id="PRO_0000137049" description="Nucleoside diphosphate kinase">
    <location>
        <begin position="1"/>
        <end position="149"/>
    </location>
</feature>
<feature type="active site" description="Pros-phosphohistidine intermediate" evidence="1">
    <location>
        <position position="115"/>
    </location>
</feature>
<feature type="binding site" evidence="1">
    <location>
        <position position="9"/>
    </location>
    <ligand>
        <name>ATP</name>
        <dbReference type="ChEBI" id="CHEBI:30616"/>
    </ligand>
</feature>
<feature type="binding site" evidence="1">
    <location>
        <position position="57"/>
    </location>
    <ligand>
        <name>ATP</name>
        <dbReference type="ChEBI" id="CHEBI:30616"/>
    </ligand>
</feature>
<feature type="binding site" evidence="1">
    <location>
        <position position="85"/>
    </location>
    <ligand>
        <name>ATP</name>
        <dbReference type="ChEBI" id="CHEBI:30616"/>
    </ligand>
</feature>
<feature type="binding site" evidence="1">
    <location>
        <position position="91"/>
    </location>
    <ligand>
        <name>ATP</name>
        <dbReference type="ChEBI" id="CHEBI:30616"/>
    </ligand>
</feature>
<feature type="binding site" evidence="1">
    <location>
        <position position="102"/>
    </location>
    <ligand>
        <name>ATP</name>
        <dbReference type="ChEBI" id="CHEBI:30616"/>
    </ligand>
</feature>
<feature type="binding site" evidence="1">
    <location>
        <position position="112"/>
    </location>
    <ligand>
        <name>ATP</name>
        <dbReference type="ChEBI" id="CHEBI:30616"/>
    </ligand>
</feature>
<gene>
    <name evidence="1" type="primary">ndk</name>
</gene>
<sequence>MERTFLMIKPDAVQRNLIGEVISRIERKGLKLVGGKLMQVPMELAETHYGEHQGKPFYNDLISFITSAPVFAMVVEGEDAVNVSRHIIGSTNPSEASPGSIRGDLGLTVGRNIIHGSDSLESAEREINLWFNENEITSYASPRDAWLYE</sequence>
<dbReference type="EC" id="2.7.4.6" evidence="1"/>
<dbReference type="EMBL" id="U31979">
    <property type="protein sequence ID" value="AAB41906.1"/>
    <property type="molecule type" value="Genomic_DNA"/>
</dbReference>
<dbReference type="RefSeq" id="WP_000442480.1">
    <property type="nucleotide sequence ID" value="NZ_WYDB01000002.1"/>
</dbReference>
<dbReference type="SMR" id="P68870"/>
<dbReference type="GeneID" id="66839658"/>
<dbReference type="OMA" id="QHYGEHK"/>
<dbReference type="OrthoDB" id="9801161at2"/>
<dbReference type="GO" id="GO:0005737">
    <property type="term" value="C:cytoplasm"/>
    <property type="evidence" value="ECO:0007669"/>
    <property type="project" value="UniProtKB-SubCell"/>
</dbReference>
<dbReference type="GO" id="GO:0005524">
    <property type="term" value="F:ATP binding"/>
    <property type="evidence" value="ECO:0007669"/>
    <property type="project" value="UniProtKB-UniRule"/>
</dbReference>
<dbReference type="GO" id="GO:0046872">
    <property type="term" value="F:metal ion binding"/>
    <property type="evidence" value="ECO:0007669"/>
    <property type="project" value="UniProtKB-KW"/>
</dbReference>
<dbReference type="GO" id="GO:0004550">
    <property type="term" value="F:nucleoside diphosphate kinase activity"/>
    <property type="evidence" value="ECO:0007669"/>
    <property type="project" value="UniProtKB-UniRule"/>
</dbReference>
<dbReference type="GO" id="GO:0006241">
    <property type="term" value="P:CTP biosynthetic process"/>
    <property type="evidence" value="ECO:0007669"/>
    <property type="project" value="UniProtKB-UniRule"/>
</dbReference>
<dbReference type="GO" id="GO:0006183">
    <property type="term" value="P:GTP biosynthetic process"/>
    <property type="evidence" value="ECO:0007669"/>
    <property type="project" value="UniProtKB-UniRule"/>
</dbReference>
<dbReference type="GO" id="GO:0006228">
    <property type="term" value="P:UTP biosynthetic process"/>
    <property type="evidence" value="ECO:0007669"/>
    <property type="project" value="UniProtKB-UniRule"/>
</dbReference>
<dbReference type="CDD" id="cd04413">
    <property type="entry name" value="NDPk_I"/>
    <property type="match status" value="1"/>
</dbReference>
<dbReference type="FunFam" id="3.30.70.141:FF:000002">
    <property type="entry name" value="Nucleoside diphosphate kinase"/>
    <property type="match status" value="1"/>
</dbReference>
<dbReference type="Gene3D" id="3.30.70.141">
    <property type="entry name" value="Nucleoside diphosphate kinase-like domain"/>
    <property type="match status" value="1"/>
</dbReference>
<dbReference type="HAMAP" id="MF_00451">
    <property type="entry name" value="NDP_kinase"/>
    <property type="match status" value="1"/>
</dbReference>
<dbReference type="InterPro" id="IPR034907">
    <property type="entry name" value="NDK-like_dom"/>
</dbReference>
<dbReference type="InterPro" id="IPR036850">
    <property type="entry name" value="NDK-like_dom_sf"/>
</dbReference>
<dbReference type="InterPro" id="IPR001564">
    <property type="entry name" value="Nucleoside_diP_kinase"/>
</dbReference>
<dbReference type="InterPro" id="IPR023005">
    <property type="entry name" value="Nucleoside_diP_kinase_AS"/>
</dbReference>
<dbReference type="NCBIfam" id="NF001908">
    <property type="entry name" value="PRK00668.1"/>
    <property type="match status" value="1"/>
</dbReference>
<dbReference type="PANTHER" id="PTHR11349">
    <property type="entry name" value="NUCLEOSIDE DIPHOSPHATE KINASE"/>
    <property type="match status" value="1"/>
</dbReference>
<dbReference type="Pfam" id="PF00334">
    <property type="entry name" value="NDK"/>
    <property type="match status" value="1"/>
</dbReference>
<dbReference type="PRINTS" id="PR01243">
    <property type="entry name" value="NUCDPKINASE"/>
</dbReference>
<dbReference type="SMART" id="SM00562">
    <property type="entry name" value="NDK"/>
    <property type="match status" value="1"/>
</dbReference>
<dbReference type="SUPFAM" id="SSF54919">
    <property type="entry name" value="Nucleoside diphosphate kinase, NDK"/>
    <property type="match status" value="1"/>
</dbReference>
<dbReference type="PROSITE" id="PS00469">
    <property type="entry name" value="NDPK"/>
    <property type="match status" value="1"/>
</dbReference>
<dbReference type="PROSITE" id="PS51374">
    <property type="entry name" value="NDPK_LIKE"/>
    <property type="match status" value="1"/>
</dbReference>
<name>NDK_STAAU</name>
<keyword id="KW-0067">ATP-binding</keyword>
<keyword id="KW-0963">Cytoplasm</keyword>
<keyword id="KW-0418">Kinase</keyword>
<keyword id="KW-0460">Magnesium</keyword>
<keyword id="KW-0479">Metal-binding</keyword>
<keyword id="KW-0546">Nucleotide metabolism</keyword>
<keyword id="KW-0547">Nucleotide-binding</keyword>
<keyword id="KW-0597">Phosphoprotein</keyword>
<keyword id="KW-0808">Transferase</keyword>
<organism>
    <name type="scientific">Staphylococcus aureus</name>
    <dbReference type="NCBI Taxonomy" id="1280"/>
    <lineage>
        <taxon>Bacteria</taxon>
        <taxon>Bacillati</taxon>
        <taxon>Bacillota</taxon>
        <taxon>Bacilli</taxon>
        <taxon>Bacillales</taxon>
        <taxon>Staphylococcaceae</taxon>
        <taxon>Staphylococcus</taxon>
    </lineage>
</organism>
<comment type="function">
    <text evidence="1">Major role in the synthesis of nucleoside triphosphates other than ATP. The ATP gamma phosphate is transferred to the NDP beta phosphate via a ping-pong mechanism, using a phosphorylated active-site intermediate.</text>
</comment>
<comment type="catalytic activity">
    <reaction evidence="1">
        <text>a 2'-deoxyribonucleoside 5'-diphosphate + ATP = a 2'-deoxyribonucleoside 5'-triphosphate + ADP</text>
        <dbReference type="Rhea" id="RHEA:44640"/>
        <dbReference type="ChEBI" id="CHEBI:30616"/>
        <dbReference type="ChEBI" id="CHEBI:61560"/>
        <dbReference type="ChEBI" id="CHEBI:73316"/>
        <dbReference type="ChEBI" id="CHEBI:456216"/>
        <dbReference type="EC" id="2.7.4.6"/>
    </reaction>
</comment>
<comment type="catalytic activity">
    <reaction evidence="1">
        <text>a ribonucleoside 5'-diphosphate + ATP = a ribonucleoside 5'-triphosphate + ADP</text>
        <dbReference type="Rhea" id="RHEA:18113"/>
        <dbReference type="ChEBI" id="CHEBI:30616"/>
        <dbReference type="ChEBI" id="CHEBI:57930"/>
        <dbReference type="ChEBI" id="CHEBI:61557"/>
        <dbReference type="ChEBI" id="CHEBI:456216"/>
        <dbReference type="EC" id="2.7.4.6"/>
    </reaction>
</comment>
<comment type="cofactor">
    <cofactor evidence="1">
        <name>Mg(2+)</name>
        <dbReference type="ChEBI" id="CHEBI:18420"/>
    </cofactor>
</comment>
<comment type="subunit">
    <text evidence="1">Homotetramer.</text>
</comment>
<comment type="subcellular location">
    <subcellularLocation>
        <location evidence="1">Cytoplasm</location>
    </subcellularLocation>
</comment>
<comment type="similarity">
    <text evidence="1 2">Belongs to the NDK family.</text>
</comment>
<proteinExistence type="inferred from homology"/>
<protein>
    <recommendedName>
        <fullName evidence="1">Nucleoside diphosphate kinase</fullName>
        <shortName evidence="1">NDK</shortName>
        <shortName evidence="1">NDP kinase</shortName>
        <ecNumber evidence="1">2.7.4.6</ecNumber>
    </recommendedName>
    <alternativeName>
        <fullName evidence="1">Nucleoside-2-P kinase</fullName>
    </alternativeName>
</protein>